<proteinExistence type="inferred from homology"/>
<evidence type="ECO:0000250" key="1"/>
<evidence type="ECO:0000255" key="2">
    <source>
        <dbReference type="PROSITE-ProRule" id="PRU00660"/>
    </source>
</evidence>
<evidence type="ECO:0000305" key="3"/>
<keyword id="KW-0521">NADP</keyword>
<keyword id="KW-0554">One-carbon metabolism</keyword>
<keyword id="KW-0560">Oxidoreductase</keyword>
<keyword id="KW-1185">Reference proteome</keyword>
<comment type="function">
    <text evidence="1">Key enzyme in folate metabolism. Catalyzes an essential reaction for de novo glycine and purine synthesis, and for DNA precursor synthesis (By similarity).</text>
</comment>
<comment type="catalytic activity">
    <reaction evidence="2">
        <text>(6S)-5,6,7,8-tetrahydrofolate + NADP(+) = 7,8-dihydrofolate + NADPH + H(+)</text>
        <dbReference type="Rhea" id="RHEA:15009"/>
        <dbReference type="ChEBI" id="CHEBI:15378"/>
        <dbReference type="ChEBI" id="CHEBI:57451"/>
        <dbReference type="ChEBI" id="CHEBI:57453"/>
        <dbReference type="ChEBI" id="CHEBI:57783"/>
        <dbReference type="ChEBI" id="CHEBI:58349"/>
        <dbReference type="EC" id="1.5.1.3"/>
    </reaction>
</comment>
<comment type="pathway">
    <text>Cofactor biosynthesis; tetrahydrofolate biosynthesis; 5,6,7,8-tetrahydrofolate from 7,8-dihydrofolate: step 1/1.</text>
</comment>
<comment type="similarity">
    <text evidence="3">Belongs to the dihydrofolate reductase family.</text>
</comment>
<accession>Q5V3R2</accession>
<organism>
    <name type="scientific">Haloarcula marismortui (strain ATCC 43049 / DSM 3752 / JCM 8966 / VKM B-1809)</name>
    <name type="common">Halobacterium marismortui</name>
    <dbReference type="NCBI Taxonomy" id="272569"/>
    <lineage>
        <taxon>Archaea</taxon>
        <taxon>Methanobacteriati</taxon>
        <taxon>Methanobacteriota</taxon>
        <taxon>Stenosarchaea group</taxon>
        <taxon>Halobacteria</taxon>
        <taxon>Halobacteriales</taxon>
        <taxon>Haloarculaceae</taxon>
        <taxon>Haloarcula</taxon>
    </lineage>
</organism>
<feature type="chain" id="PRO_0000186431" description="Dihydrofolate reductase 1">
    <location>
        <begin position="1"/>
        <end position="185"/>
    </location>
</feature>
<feature type="domain" description="DHFR" evidence="2">
    <location>
        <begin position="8"/>
        <end position="185"/>
    </location>
</feature>
<reference key="1">
    <citation type="journal article" date="2004" name="Genome Res.">
        <title>Genome sequence of Haloarcula marismortui: a halophilic archaeon from the Dead Sea.</title>
        <authorList>
            <person name="Baliga N.S."/>
            <person name="Bonneau R."/>
            <person name="Facciotti M.T."/>
            <person name="Pan M."/>
            <person name="Glusman G."/>
            <person name="Deutsch E.W."/>
            <person name="Shannon P."/>
            <person name="Chiu Y."/>
            <person name="Weng R.S."/>
            <person name="Gan R.R."/>
            <person name="Hung P."/>
            <person name="Date S.V."/>
            <person name="Marcotte E."/>
            <person name="Hood L."/>
            <person name="Ng W.V."/>
        </authorList>
    </citation>
    <scope>NUCLEOTIDE SEQUENCE [LARGE SCALE GENOMIC DNA]</scope>
    <source>
        <strain>ATCC 43049 / DSM 3752 / JCM 8966 / VKM B-1809</strain>
    </source>
</reference>
<sequence length="185" mass="20284">MTMIPDTELVLVVAADENNVIGLDGGVPWHYPEDVRQYKNRIAGHPIILGRRTFESMKPIPDCYTVVLTSDDRRSADSETVEYATTPQIAVEAAARAGASGAFAGDSAGADSSPPVTYVIGGEAVYDLFLPFAGRVFLSRIHEHNEGDRYFPDLGAEWTELSREPHDGFDVIEYEQASPRPLDDL</sequence>
<name>DYR1_HALMA</name>
<gene>
    <name type="primary">folA1</name>
    <name type="ordered locus">rrnAC0859</name>
</gene>
<protein>
    <recommendedName>
        <fullName>Dihydrofolate reductase 1</fullName>
        <ecNumber>1.5.1.3</ecNumber>
    </recommendedName>
</protein>
<dbReference type="EC" id="1.5.1.3"/>
<dbReference type="EMBL" id="AY596297">
    <property type="protein sequence ID" value="AAV45840.1"/>
    <property type="molecule type" value="Genomic_DNA"/>
</dbReference>
<dbReference type="RefSeq" id="WP_011223281.1">
    <property type="nucleotide sequence ID" value="NC_006396.1"/>
</dbReference>
<dbReference type="SMR" id="Q5V3R2"/>
<dbReference type="STRING" id="272569.rrnAC0859"/>
<dbReference type="PaxDb" id="272569-rrnAC0859"/>
<dbReference type="EnsemblBacteria" id="AAV45840">
    <property type="protein sequence ID" value="AAV45840"/>
    <property type="gene ID" value="rrnAC0859"/>
</dbReference>
<dbReference type="GeneID" id="40151884"/>
<dbReference type="KEGG" id="hma:rrnAC0859"/>
<dbReference type="PATRIC" id="fig|272569.17.peg.1598"/>
<dbReference type="eggNOG" id="arCOG01490">
    <property type="taxonomic scope" value="Archaea"/>
</dbReference>
<dbReference type="HOGENOM" id="CLU_043966_5_2_2"/>
<dbReference type="UniPathway" id="UPA00077">
    <property type="reaction ID" value="UER00158"/>
</dbReference>
<dbReference type="Proteomes" id="UP000001169">
    <property type="component" value="Chromosome I"/>
</dbReference>
<dbReference type="GO" id="GO:0005829">
    <property type="term" value="C:cytosol"/>
    <property type="evidence" value="ECO:0007669"/>
    <property type="project" value="TreeGrafter"/>
</dbReference>
<dbReference type="GO" id="GO:0004146">
    <property type="term" value="F:dihydrofolate reductase activity"/>
    <property type="evidence" value="ECO:0007669"/>
    <property type="project" value="UniProtKB-EC"/>
</dbReference>
<dbReference type="GO" id="GO:0050661">
    <property type="term" value="F:NADP binding"/>
    <property type="evidence" value="ECO:0007669"/>
    <property type="project" value="InterPro"/>
</dbReference>
<dbReference type="GO" id="GO:0046452">
    <property type="term" value="P:dihydrofolate metabolic process"/>
    <property type="evidence" value="ECO:0007669"/>
    <property type="project" value="TreeGrafter"/>
</dbReference>
<dbReference type="GO" id="GO:0046655">
    <property type="term" value="P:folic acid metabolic process"/>
    <property type="evidence" value="ECO:0007669"/>
    <property type="project" value="TreeGrafter"/>
</dbReference>
<dbReference type="GO" id="GO:0006730">
    <property type="term" value="P:one-carbon metabolic process"/>
    <property type="evidence" value="ECO:0007669"/>
    <property type="project" value="UniProtKB-KW"/>
</dbReference>
<dbReference type="GO" id="GO:0046654">
    <property type="term" value="P:tetrahydrofolate biosynthetic process"/>
    <property type="evidence" value="ECO:0007669"/>
    <property type="project" value="UniProtKB-UniPathway"/>
</dbReference>
<dbReference type="CDD" id="cd00209">
    <property type="entry name" value="DHFR"/>
    <property type="match status" value="1"/>
</dbReference>
<dbReference type="Gene3D" id="3.40.430.10">
    <property type="entry name" value="Dihydrofolate Reductase, subunit A"/>
    <property type="match status" value="1"/>
</dbReference>
<dbReference type="InterPro" id="IPR012259">
    <property type="entry name" value="DHFR"/>
</dbReference>
<dbReference type="InterPro" id="IPR024072">
    <property type="entry name" value="DHFR-like_dom_sf"/>
</dbReference>
<dbReference type="InterPro" id="IPR017925">
    <property type="entry name" value="DHFR_CS"/>
</dbReference>
<dbReference type="InterPro" id="IPR001796">
    <property type="entry name" value="DHFR_dom"/>
</dbReference>
<dbReference type="PANTHER" id="PTHR48069">
    <property type="entry name" value="DIHYDROFOLATE REDUCTASE"/>
    <property type="match status" value="1"/>
</dbReference>
<dbReference type="PANTHER" id="PTHR48069:SF3">
    <property type="entry name" value="DIHYDROFOLATE REDUCTASE"/>
    <property type="match status" value="1"/>
</dbReference>
<dbReference type="Pfam" id="PF00186">
    <property type="entry name" value="DHFR_1"/>
    <property type="match status" value="1"/>
</dbReference>
<dbReference type="PIRSF" id="PIRSF000194">
    <property type="entry name" value="DHFR"/>
    <property type="match status" value="1"/>
</dbReference>
<dbReference type="PRINTS" id="PR00070">
    <property type="entry name" value="DHFR"/>
</dbReference>
<dbReference type="SUPFAM" id="SSF53597">
    <property type="entry name" value="Dihydrofolate reductase-like"/>
    <property type="match status" value="1"/>
</dbReference>
<dbReference type="PROSITE" id="PS00075">
    <property type="entry name" value="DHFR_1"/>
    <property type="match status" value="1"/>
</dbReference>
<dbReference type="PROSITE" id="PS51330">
    <property type="entry name" value="DHFR_2"/>
    <property type="match status" value="1"/>
</dbReference>